<organism>
    <name type="scientific">Arabidopsis thaliana</name>
    <name type="common">Mouse-ear cress</name>
    <dbReference type="NCBI Taxonomy" id="3702"/>
    <lineage>
        <taxon>Eukaryota</taxon>
        <taxon>Viridiplantae</taxon>
        <taxon>Streptophyta</taxon>
        <taxon>Embryophyta</taxon>
        <taxon>Tracheophyta</taxon>
        <taxon>Spermatophyta</taxon>
        <taxon>Magnoliopsida</taxon>
        <taxon>eudicotyledons</taxon>
        <taxon>Gunneridae</taxon>
        <taxon>Pentapetalae</taxon>
        <taxon>rosids</taxon>
        <taxon>malvids</taxon>
        <taxon>Brassicales</taxon>
        <taxon>Brassicaceae</taxon>
        <taxon>Camelineae</taxon>
        <taxon>Arabidopsis</taxon>
    </lineage>
</organism>
<keyword id="KW-0010">Activator</keyword>
<keyword id="KW-0025">Alternative splicing</keyword>
<keyword id="KW-0963">Cytoplasm</keyword>
<keyword id="KW-0238">DNA-binding</keyword>
<keyword id="KW-1017">Isopeptide bond</keyword>
<keyword id="KW-0539">Nucleus</keyword>
<keyword id="KW-0597">Phosphoprotein</keyword>
<keyword id="KW-1185">Reference proteome</keyword>
<keyword id="KW-0677">Repeat</keyword>
<keyword id="KW-0346">Stress response</keyword>
<keyword id="KW-0804">Transcription</keyword>
<keyword id="KW-0805">Transcription regulation</keyword>
<keyword id="KW-0832">Ubl conjugation</keyword>
<gene>
    <name evidence="13 14 15" type="primary">HSFA2</name>
    <name evidence="16" type="synonym">HSF04</name>
    <name evidence="19" type="ordered locus">At2g26150</name>
    <name evidence="20" type="ORF">T19L18.4</name>
</gene>
<feature type="chain" id="PRO_0000270802" description="Heat stress transcription factor A-2">
    <location>
        <begin position="1"/>
        <end position="345"/>
    </location>
</feature>
<feature type="DNA-binding region" evidence="2">
    <location>
        <begin position="42"/>
        <end position="136"/>
    </location>
</feature>
<feature type="region of interest" description="Disordered" evidence="5">
    <location>
        <begin position="17"/>
        <end position="40"/>
    </location>
</feature>
<feature type="region of interest" description="Hydrophobic repeat HR-A/B" evidence="3">
    <location>
        <begin position="150"/>
        <end position="216"/>
    </location>
</feature>
<feature type="short sequence motif" description="Nuclear localization signal" evidence="4">
    <location>
        <begin position="231"/>
        <end position="238"/>
    </location>
</feature>
<feature type="short sequence motif" description="AHA1" evidence="3">
    <location>
        <begin position="273"/>
        <end position="282"/>
    </location>
</feature>
<feature type="short sequence motif" description="AHA2" evidence="3">
    <location>
        <begin position="324"/>
        <end position="333"/>
    </location>
</feature>
<feature type="short sequence motif" description="Nuclear export signal" evidence="3">
    <location>
        <begin position="334"/>
        <end position="341"/>
    </location>
</feature>
<feature type="compositionally biased region" description="Low complexity" evidence="5">
    <location>
        <begin position="17"/>
        <end position="30"/>
    </location>
</feature>
<feature type="cross-link" description="Glycyl lysine isopeptide (Lys-Gly) (interchain with G-Cter in SUMO)" evidence="11">
    <location>
        <position position="315"/>
    </location>
</feature>
<feature type="mutagenesis site" description="No effect on SUMO1 binding." evidence="11">
    <original>K</original>
    <variation>R</variation>
    <location>
        <position position="5"/>
    </location>
</feature>
<feature type="mutagenesis site" description="Reduces SUMO1 binding efficiency." evidence="11">
    <original>K</original>
    <variation>R</variation>
    <location>
        <position position="167"/>
    </location>
</feature>
<feature type="mutagenesis site" description="Increases SUMO1 binding efficiency." evidence="11">
    <original>K</original>
    <variation>R</variation>
    <location>
        <position position="269"/>
    </location>
</feature>
<feature type="mutagenesis site" description="Loss of sumoylation. Loss of SUMO1 binding." evidence="11">
    <original>K</original>
    <variation>R</variation>
    <location>
        <position position="315"/>
    </location>
</feature>
<sequence>MEELKVEMEEETVTFTGSVAASSSVGSSSSPRPMEGLNETGPPPFLTKTYEMVEDPATDTVVSWSNGRNSFVVWDSHKFSTTLLPRYFKHSNFSSFIRQLNTYGFRKIDPDRWEFANEGFLAGQKHLLKNIKRRRNMGLQNVNQQGSGMSCVEVGQYGFDGEVERLKRDHGVLVAEVVRLRQQQHSSKSQVAAMEQRLLVTEKRQQQMMTFLAKALNNPNFVQQFAVMSKEKKSLFGLDVGRKRRLTSTPSLGTMEENLLHDQEFDRMKDDMEMLFAAAIDDEANNSMPTKEEQCLEAMNVMMRDGNLEAALDVKVEDLVGSPLDWDSQDLHDMVDQMGFLGSEP</sequence>
<dbReference type="EMBL" id="AC004747">
    <property type="protein sequence ID" value="AAC31222.1"/>
    <property type="molecule type" value="Genomic_DNA"/>
</dbReference>
<dbReference type="EMBL" id="CP002685">
    <property type="protein sequence ID" value="AEC07800.1"/>
    <property type="molecule type" value="Genomic_DNA"/>
</dbReference>
<dbReference type="EMBL" id="CP002685">
    <property type="protein sequence ID" value="ANM62674.1"/>
    <property type="molecule type" value="Genomic_DNA"/>
</dbReference>
<dbReference type="EMBL" id="AK118744">
    <property type="protein sequence ID" value="BAC43337.1"/>
    <property type="molecule type" value="mRNA"/>
</dbReference>
<dbReference type="PIR" id="T02609">
    <property type="entry name" value="T02609"/>
</dbReference>
<dbReference type="RefSeq" id="NP_001324815.1">
    <molecule id="O80982-1"/>
    <property type="nucleotide sequence ID" value="NM_001336039.1"/>
</dbReference>
<dbReference type="RefSeq" id="NP_180184.1">
    <molecule id="O80982-1"/>
    <property type="nucleotide sequence ID" value="NM_128173.3"/>
</dbReference>
<dbReference type="SMR" id="O80982"/>
<dbReference type="BioGRID" id="2507">
    <property type="interactions" value="6"/>
</dbReference>
<dbReference type="FunCoup" id="O80982">
    <property type="interactions" value="880"/>
</dbReference>
<dbReference type="IntAct" id="O80982">
    <property type="interactions" value="2"/>
</dbReference>
<dbReference type="MINT" id="O80982"/>
<dbReference type="STRING" id="3702.O80982"/>
<dbReference type="iPTMnet" id="O80982"/>
<dbReference type="PaxDb" id="3702-AT2G26150.1"/>
<dbReference type="ProteomicsDB" id="230150">
    <molecule id="O80982-1"/>
</dbReference>
<dbReference type="EnsemblPlants" id="AT2G26150.1">
    <molecule id="O80982-1"/>
    <property type="protein sequence ID" value="AT2G26150.1"/>
    <property type="gene ID" value="AT2G26150"/>
</dbReference>
<dbReference type="EnsemblPlants" id="AT2G26150.4">
    <molecule id="O80982-1"/>
    <property type="protein sequence ID" value="AT2G26150.4"/>
    <property type="gene ID" value="AT2G26150"/>
</dbReference>
<dbReference type="GeneID" id="817155"/>
<dbReference type="Gramene" id="AT2G26150.1">
    <molecule id="O80982-1"/>
    <property type="protein sequence ID" value="AT2G26150.1"/>
    <property type="gene ID" value="AT2G26150"/>
</dbReference>
<dbReference type="Gramene" id="AT2G26150.4">
    <molecule id="O80982-1"/>
    <property type="protein sequence ID" value="AT2G26150.4"/>
    <property type="gene ID" value="AT2G26150"/>
</dbReference>
<dbReference type="KEGG" id="ath:AT2G26150"/>
<dbReference type="Araport" id="AT2G26150"/>
<dbReference type="TAIR" id="AT2G26150">
    <property type="gene designation" value="HSFA2"/>
</dbReference>
<dbReference type="eggNOG" id="KOG0627">
    <property type="taxonomic scope" value="Eukaryota"/>
</dbReference>
<dbReference type="HOGENOM" id="CLU_030308_1_1_1"/>
<dbReference type="InParanoid" id="O80982"/>
<dbReference type="OMA" id="WSTSCNS"/>
<dbReference type="PhylomeDB" id="O80982"/>
<dbReference type="PRO" id="PR:O80982"/>
<dbReference type="Proteomes" id="UP000006548">
    <property type="component" value="Chromosome 2"/>
</dbReference>
<dbReference type="ExpressionAtlas" id="O80982">
    <property type="expression patterns" value="baseline and differential"/>
</dbReference>
<dbReference type="GO" id="GO:0005737">
    <property type="term" value="C:cytoplasm"/>
    <property type="evidence" value="ECO:0007669"/>
    <property type="project" value="UniProtKB-SubCell"/>
</dbReference>
<dbReference type="GO" id="GO:0005634">
    <property type="term" value="C:nucleus"/>
    <property type="evidence" value="ECO:0000314"/>
    <property type="project" value="UniProtKB"/>
</dbReference>
<dbReference type="GO" id="GO:0003700">
    <property type="term" value="F:DNA-binding transcription factor activity"/>
    <property type="evidence" value="ECO:0000314"/>
    <property type="project" value="UniProtKB"/>
</dbReference>
<dbReference type="GO" id="GO:1990841">
    <property type="term" value="F:promoter-specific chromatin binding"/>
    <property type="evidence" value="ECO:0000314"/>
    <property type="project" value="UniProtKB"/>
</dbReference>
<dbReference type="GO" id="GO:0043565">
    <property type="term" value="F:sequence-specific DNA binding"/>
    <property type="evidence" value="ECO:0000314"/>
    <property type="project" value="UniProtKB"/>
</dbReference>
<dbReference type="GO" id="GO:0000976">
    <property type="term" value="F:transcription cis-regulatory region binding"/>
    <property type="evidence" value="ECO:0000314"/>
    <property type="project" value="UniProtKB"/>
</dbReference>
<dbReference type="GO" id="GO:0034605">
    <property type="term" value="P:cellular response to heat"/>
    <property type="evidence" value="ECO:0000270"/>
    <property type="project" value="TAIR"/>
</dbReference>
<dbReference type="GO" id="GO:0071456">
    <property type="term" value="P:cellular response to hypoxia"/>
    <property type="evidence" value="ECO:0000270"/>
    <property type="project" value="TAIR"/>
</dbReference>
<dbReference type="GO" id="GO:0034620">
    <property type="term" value="P:cellular response to unfolded protein"/>
    <property type="evidence" value="ECO:0000315"/>
    <property type="project" value="TAIR"/>
</dbReference>
<dbReference type="GO" id="GO:0010286">
    <property type="term" value="P:heat acclimation"/>
    <property type="evidence" value="ECO:0000315"/>
    <property type="project" value="UniProtKB"/>
</dbReference>
<dbReference type="GO" id="GO:0045893">
    <property type="term" value="P:positive regulation of DNA-templated transcription"/>
    <property type="evidence" value="ECO:0000314"/>
    <property type="project" value="UniProtKB"/>
</dbReference>
<dbReference type="GO" id="GO:0009408">
    <property type="term" value="P:response to heat"/>
    <property type="evidence" value="ECO:0000270"/>
    <property type="project" value="UniProtKB"/>
</dbReference>
<dbReference type="GO" id="GO:0042542">
    <property type="term" value="P:response to hydrogen peroxide"/>
    <property type="evidence" value="ECO:0000270"/>
    <property type="project" value="TAIR"/>
</dbReference>
<dbReference type="GO" id="GO:0001666">
    <property type="term" value="P:response to hypoxia"/>
    <property type="evidence" value="ECO:0000315"/>
    <property type="project" value="TAIR"/>
</dbReference>
<dbReference type="FunFam" id="1.10.10.10:FF:000057">
    <property type="entry name" value="Heat shock transcription factor 1"/>
    <property type="match status" value="1"/>
</dbReference>
<dbReference type="Gene3D" id="1.10.10.10">
    <property type="entry name" value="Winged helix-like DNA-binding domain superfamily/Winged helix DNA-binding domain"/>
    <property type="match status" value="1"/>
</dbReference>
<dbReference type="InterPro" id="IPR000232">
    <property type="entry name" value="HSF_DNA-bd"/>
</dbReference>
<dbReference type="InterPro" id="IPR036388">
    <property type="entry name" value="WH-like_DNA-bd_sf"/>
</dbReference>
<dbReference type="InterPro" id="IPR036390">
    <property type="entry name" value="WH_DNA-bd_sf"/>
</dbReference>
<dbReference type="PANTHER" id="PTHR10015">
    <property type="entry name" value="HEAT SHOCK TRANSCRIPTION FACTOR"/>
    <property type="match status" value="1"/>
</dbReference>
<dbReference type="PANTHER" id="PTHR10015:SF338">
    <property type="entry name" value="HEAT STRESS TRANSCRIPTION FACTOR A-2"/>
    <property type="match status" value="1"/>
</dbReference>
<dbReference type="Pfam" id="PF00447">
    <property type="entry name" value="HSF_DNA-bind"/>
    <property type="match status" value="1"/>
</dbReference>
<dbReference type="PRINTS" id="PR00056">
    <property type="entry name" value="HSFDOMAIN"/>
</dbReference>
<dbReference type="SMART" id="SM00415">
    <property type="entry name" value="HSF"/>
    <property type="match status" value="1"/>
</dbReference>
<dbReference type="SUPFAM" id="SSF46785">
    <property type="entry name" value="Winged helix' DNA-binding domain"/>
    <property type="match status" value="1"/>
</dbReference>
<dbReference type="PROSITE" id="PS00434">
    <property type="entry name" value="HSF_DOMAIN"/>
    <property type="match status" value="1"/>
</dbReference>
<protein>
    <recommendedName>
        <fullName evidence="13 14 15">Heat stress transcription factor A-2</fullName>
        <shortName evidence="13 14 15">AtHsfA2</shortName>
    </recommendedName>
    <alternativeName>
        <fullName evidence="16">AtHsf-04</fullName>
    </alternativeName>
</protein>
<comment type="function">
    <text evidence="7 8 9 12">Transcriptional activator that specifically binds DNA sequence 5'-AGAAnnTTCT-3' known as heat shock promoter elements (HSE). Seems to be involved in other environmental stress responses. Activates ascorbate peroxidase 2 (APX2) in addition to several heat shock protein (HSPs). Binds to the promoter of SGIP1 and activates its expression in heat acclimated plants (PubMed:30778176). Involved in the mechanisms necessary for quick response to heat and subsequent heritable transgenerational memory of heat acclimation (global warming) such as early flowering and attenuated immunity; this process includes epigenetic regulation as well as post-transcriptional gene silencing (PTGS) (PubMed:30778176). In response to heat, HSFA2 is activated and promotes the expression of REF6 which in turn derepresses HSFA2, thus establishing an inheritable feedback loop able to trigger SGIP1 and subsequent SGIP1-mediated SGS3 degradation; this prevents the biosynthesis of trans-acting siRNA (tasiRNA) and leads to the release of HTT5, which drives early flowering but attenuates immunity (PubMed:30778176).</text>
</comment>
<comment type="subunit">
    <text evidence="1 10 11">Homotrimer (By similarity). Interacts with SUMO1 (PubMed:20521085). Binds to HSBP (PubMed:20388662).</text>
</comment>
<comment type="subcellular location">
    <subcellularLocation>
        <location evidence="18">Cytoplasm</location>
    </subcellularLocation>
    <subcellularLocation>
        <location evidence="4 11">Nucleus</location>
    </subcellularLocation>
</comment>
<comment type="alternative products">
    <event type="alternative splicing"/>
    <isoform>
        <id>O80982-1</id>
        <name>1</name>
        <sequence type="displayed"/>
    </isoform>
    <text>A number of isoforms are produced. According to EST sequences.</text>
</comment>
<comment type="induction">
    <text evidence="7 8 9 12">By high light and hydrogen peroxide (H(2)O(2)) (PubMed:16649111, PubMed:17059409, PubMed:17085506, PubMed:30778176). Up-regulated by heat stress (at 30 degrees Celsius) and remains up-regulated transgenerationally in the unstressed progeny (at 22 degrees Celsius) via heat-induced REF6-dependent depletion of H3K27me3 marks within its coding regions (PubMed:16649111, PubMed:17059409, PubMed:17085506, PubMed:30778176).</text>
</comment>
<comment type="domain">
    <text evidence="6">The hydrophobic-rich region (HR-A/B) corresponds to the oligomerization domain. AHA motifs are transcriptional activator elements.</text>
</comment>
<comment type="PTM">
    <text evidence="1">Exhibits temperature-dependent phosphorylation.</text>
</comment>
<comment type="PTM">
    <text evidence="11">Sumoylated at Lys-315. Sumoylation represses its function.</text>
</comment>
<comment type="disruption phenotype">
    <text evidence="11 12">Heat-sensitive phenotype (PubMed:20521085). Reduced expression of SGIP1 (PubMed:30778176).</text>
</comment>
<comment type="miscellaneous">
    <text>Plants overexpressing HSFA2 show increased tolerance to combined environmental stresses.</text>
</comment>
<comment type="similarity">
    <text evidence="17">Belongs to the HSF family. Class A subfamily.</text>
</comment>
<comment type="online information" name="Protein Spotlight">
    <link uri="https://www.proteinspotlight.org/back_issues/253/"/>
    <text>A heated legacy - Issue 253 of December 2022</text>
</comment>
<name>HSFA2_ARATH</name>
<proteinExistence type="evidence at protein level"/>
<accession>O80982</accession>
<reference key="1">
    <citation type="journal article" date="1999" name="Nature">
        <title>Sequence and analysis of chromosome 2 of the plant Arabidopsis thaliana.</title>
        <authorList>
            <person name="Lin X."/>
            <person name="Kaul S."/>
            <person name="Rounsley S.D."/>
            <person name="Shea T.P."/>
            <person name="Benito M.-I."/>
            <person name="Town C.D."/>
            <person name="Fujii C.Y."/>
            <person name="Mason T.M."/>
            <person name="Bowman C.L."/>
            <person name="Barnstead M.E."/>
            <person name="Feldblyum T.V."/>
            <person name="Buell C.R."/>
            <person name="Ketchum K.A."/>
            <person name="Lee J.J."/>
            <person name="Ronning C.M."/>
            <person name="Koo H.L."/>
            <person name="Moffat K.S."/>
            <person name="Cronin L.A."/>
            <person name="Shen M."/>
            <person name="Pai G."/>
            <person name="Van Aken S."/>
            <person name="Umayam L."/>
            <person name="Tallon L.J."/>
            <person name="Gill J.E."/>
            <person name="Adams M.D."/>
            <person name="Carrera A.J."/>
            <person name="Creasy T.H."/>
            <person name="Goodman H.M."/>
            <person name="Somerville C.R."/>
            <person name="Copenhaver G.P."/>
            <person name="Preuss D."/>
            <person name="Nierman W.C."/>
            <person name="White O."/>
            <person name="Eisen J.A."/>
            <person name="Salzberg S.L."/>
            <person name="Fraser C.M."/>
            <person name="Venter J.C."/>
        </authorList>
    </citation>
    <scope>NUCLEOTIDE SEQUENCE [LARGE SCALE GENOMIC DNA]</scope>
    <source>
        <strain>cv. Columbia</strain>
    </source>
</reference>
<reference key="2">
    <citation type="journal article" date="2017" name="Plant J.">
        <title>Araport11: a complete reannotation of the Arabidopsis thaliana reference genome.</title>
        <authorList>
            <person name="Cheng C.Y."/>
            <person name="Krishnakumar V."/>
            <person name="Chan A.P."/>
            <person name="Thibaud-Nissen F."/>
            <person name="Schobel S."/>
            <person name="Town C.D."/>
        </authorList>
    </citation>
    <scope>GENOME REANNOTATION</scope>
    <source>
        <strain>cv. Columbia</strain>
    </source>
</reference>
<reference key="3">
    <citation type="journal article" date="2002" name="Science">
        <title>Functional annotation of a full-length Arabidopsis cDNA collection.</title>
        <authorList>
            <person name="Seki M."/>
            <person name="Narusaka M."/>
            <person name="Kamiya A."/>
            <person name="Ishida J."/>
            <person name="Satou M."/>
            <person name="Sakurai T."/>
            <person name="Nakajima M."/>
            <person name="Enju A."/>
            <person name="Akiyama K."/>
            <person name="Oono Y."/>
            <person name="Muramatsu M."/>
            <person name="Hayashizaki Y."/>
            <person name="Kawai J."/>
            <person name="Carninci P."/>
            <person name="Itoh M."/>
            <person name="Ishii Y."/>
            <person name="Arakawa T."/>
            <person name="Shibata K."/>
            <person name="Shinagawa A."/>
            <person name="Shinozaki K."/>
        </authorList>
    </citation>
    <scope>NUCLEOTIDE SEQUENCE [LARGE SCALE MRNA]</scope>
    <source>
        <strain>cv. Columbia</strain>
    </source>
</reference>
<reference key="4">
    <citation type="journal article" date="2001" name="Cell Stress Chaperones">
        <title>Arabidopsis and the heat stress transcription factor world: how many heat stress transcription factors do we need?</title>
        <authorList>
            <person name="Nover L."/>
            <person name="Bharti K."/>
            <person name="Doering P."/>
            <person name="Mishra S.K."/>
            <person name="Ganguli A."/>
            <person name="Scharf K.-D."/>
        </authorList>
    </citation>
    <scope>GENE FAMILY</scope>
    <scope>NOMENCLATURE</scope>
    <scope>DOMAIN AHA</scope>
</reference>
<reference key="5">
    <citation type="journal article" date="2006" name="Plant J.">
        <title>Arabidopsis heat shock transcription factor A2 as a key regulator in response to several types of environmental stress.</title>
        <authorList>
            <person name="Nishizawa A."/>
            <person name="Yabuta Y."/>
            <person name="Yoshida E."/>
            <person name="Maruta T."/>
            <person name="Yoshimura K."/>
            <person name="Shigeoka S."/>
        </authorList>
    </citation>
    <scope>FUNCTION</scope>
    <scope>INDUCTION</scope>
</reference>
<reference key="6">
    <citation type="journal article" date="2006" name="Plant Mol. Biol.">
        <title>The heat stress transcription factor HsfA2 serves as a regulatory amplifier of a subset of genes in the heat stress response in Arabidopsis.</title>
        <authorList>
            <person name="Schramm F."/>
            <person name="Ganguli A."/>
            <person name="Kiehlmann E."/>
            <person name="Englich G."/>
            <person name="Walch D."/>
            <person name="von Koskull-Doering P."/>
        </authorList>
    </citation>
    <scope>FUNCTION</scope>
    <scope>INDUCTION</scope>
</reference>
<reference key="7">
    <citation type="journal article" date="2007" name="Plant Physiol.">
        <title>A heat-inducible transcription factor, HsfA2, is required for extension of acquired thermotolerance in Arabidopsis.</title>
        <authorList>
            <person name="Charng Y.-Y."/>
            <person name="Liu H.-C."/>
            <person name="Liu N.-Y."/>
            <person name="Chi W.-T."/>
            <person name="Wang C.-N."/>
            <person name="Chang S.-H."/>
            <person name="Wang T.-T."/>
        </authorList>
    </citation>
    <scope>FUNCTION</scope>
    <scope>INDUCTION</scope>
</reference>
<reference key="8">
    <citation type="journal article" date="2008" name="J. Genet. Genomics">
        <title>Genome-wide analysis of heat shock transcription factor families in rice and Arabidopsis.</title>
        <authorList>
            <person name="Guo J."/>
            <person name="Wu J."/>
            <person name="Ji Q."/>
            <person name="Wang C."/>
            <person name="Luo L."/>
            <person name="Yuan Y."/>
            <person name="Wang Y."/>
            <person name="Wang J."/>
        </authorList>
    </citation>
    <scope>GENE FAMILY</scope>
    <scope>NOMENCLATURE</scope>
</reference>
<reference key="9">
    <citation type="journal article" date="2010" name="Plant Mol. Biol.">
        <title>Sumoylation of Arabidopsis heat shock factor A2 (HsfA2) modifies its activity during acquired thermotholerance.</title>
        <authorList>
            <person name="Cohen-Peer R."/>
            <person name="Schuster S."/>
            <person name="Meiri D."/>
            <person name="Breiman A."/>
            <person name="Avni A."/>
        </authorList>
    </citation>
    <scope>INTERACTION WITH SUMO1</scope>
    <scope>SUBCELLULAR LOCATION</scope>
    <scope>SUMOYLATION AT LYS-315</scope>
    <scope>DISRUPTION PHENOTYPE</scope>
    <scope>MUTAGENESIS OF LYS-5; LYS-167; LYS-269 AND LYS-315</scope>
</reference>
<reference key="10">
    <citation type="journal article" date="2010" name="Plant Physiol.">
        <title>Cytosol-localized heat shock factor-binding protein, AtHSBP, functions as a negative regulator of heat shock response by translocation to the nucleus and is required for seed development in Arabidopsis.</title>
        <authorList>
            <person name="Hsu S.-F."/>
            <person name="Lai H.-C."/>
            <person name="Jinn T.-L."/>
        </authorList>
    </citation>
    <scope>INTERACTION WITH HSBP</scope>
</reference>
<reference key="11">
    <citation type="journal article" date="2019" name="Cell Res.">
        <title>An H3K27me3 demethylase-HSFA2 regulatory loop orchestrates transgenerational thermomemory in Arabidopsis.</title>
        <authorList>
            <person name="Liu J."/>
            <person name="Feng L."/>
            <person name="Gu X."/>
            <person name="Deng X."/>
            <person name="Qiu Q."/>
            <person name="Li Q."/>
            <person name="Zhang Y."/>
            <person name="Wang M."/>
            <person name="Deng Y."/>
            <person name="Wang E."/>
            <person name="He Y."/>
            <person name="Baeurle I."/>
            <person name="Li J."/>
            <person name="Cao X."/>
            <person name="He Z."/>
        </authorList>
    </citation>
    <scope>FUNCTION</scope>
    <scope>DISRUPTION PHENOTYPE</scope>
    <scope>INDUCTION BY HEAT</scope>
    <source>
        <strain>cv. Columbia</strain>
    </source>
</reference>
<evidence type="ECO:0000250" key="1"/>
<evidence type="ECO:0000250" key="2">
    <source>
        <dbReference type="UniProtKB" id="P10961"/>
    </source>
</evidence>
<evidence type="ECO:0000255" key="3"/>
<evidence type="ECO:0000255" key="4">
    <source>
        <dbReference type="PROSITE-ProRule" id="PRU00768"/>
    </source>
</evidence>
<evidence type="ECO:0000256" key="5">
    <source>
        <dbReference type="SAM" id="MobiDB-lite"/>
    </source>
</evidence>
<evidence type="ECO:0000269" key="6">
    <source>
    </source>
</evidence>
<evidence type="ECO:0000269" key="7">
    <source>
    </source>
</evidence>
<evidence type="ECO:0000269" key="8">
    <source>
    </source>
</evidence>
<evidence type="ECO:0000269" key="9">
    <source>
    </source>
</evidence>
<evidence type="ECO:0000269" key="10">
    <source>
    </source>
</evidence>
<evidence type="ECO:0000269" key="11">
    <source>
    </source>
</evidence>
<evidence type="ECO:0000269" key="12">
    <source>
    </source>
</evidence>
<evidence type="ECO:0000303" key="13">
    <source>
    </source>
</evidence>
<evidence type="ECO:0000303" key="14">
    <source>
    </source>
</evidence>
<evidence type="ECO:0000303" key="15">
    <source>
    </source>
</evidence>
<evidence type="ECO:0000303" key="16">
    <source>
    </source>
</evidence>
<evidence type="ECO:0000305" key="17"/>
<evidence type="ECO:0000305" key="18">
    <source>
    </source>
</evidence>
<evidence type="ECO:0000312" key="19">
    <source>
        <dbReference type="Araport" id="AT2G26150"/>
    </source>
</evidence>
<evidence type="ECO:0000312" key="20">
    <source>
        <dbReference type="EMBL" id="AAC31222.1"/>
    </source>
</evidence>